<dbReference type="EMBL" id="CP000447">
    <property type="protein sequence ID" value="ABI72075.1"/>
    <property type="molecule type" value="Genomic_DNA"/>
</dbReference>
<dbReference type="RefSeq" id="WP_011637685.1">
    <property type="nucleotide sequence ID" value="NC_008345.1"/>
</dbReference>
<dbReference type="SMR" id="Q081J0"/>
<dbReference type="STRING" id="318167.Sfri_2229"/>
<dbReference type="KEGG" id="sfr:Sfri_2229"/>
<dbReference type="eggNOG" id="COG3109">
    <property type="taxonomic scope" value="Bacteria"/>
</dbReference>
<dbReference type="HOGENOM" id="CLU_113254_0_0_6"/>
<dbReference type="OrthoDB" id="8421419at2"/>
<dbReference type="Proteomes" id="UP000000684">
    <property type="component" value="Chromosome"/>
</dbReference>
<dbReference type="GO" id="GO:0005829">
    <property type="term" value="C:cytosol"/>
    <property type="evidence" value="ECO:0007669"/>
    <property type="project" value="TreeGrafter"/>
</dbReference>
<dbReference type="GO" id="GO:0033592">
    <property type="term" value="F:RNA strand annealing activity"/>
    <property type="evidence" value="ECO:0007669"/>
    <property type="project" value="UniProtKB-UniRule"/>
</dbReference>
<dbReference type="GO" id="GO:0034057">
    <property type="term" value="F:RNA strand-exchange activity"/>
    <property type="evidence" value="ECO:0007669"/>
    <property type="project" value="UniProtKB-UniRule"/>
</dbReference>
<dbReference type="GO" id="GO:0010608">
    <property type="term" value="P:post-transcriptional regulation of gene expression"/>
    <property type="evidence" value="ECO:0007669"/>
    <property type="project" value="InterPro"/>
</dbReference>
<dbReference type="FunFam" id="1.10.1710.10:FF:000001">
    <property type="entry name" value="RNA chaperone ProQ"/>
    <property type="match status" value="1"/>
</dbReference>
<dbReference type="Gene3D" id="1.10.1710.10">
    <property type="entry name" value="ProQ/FinO domain"/>
    <property type="match status" value="1"/>
</dbReference>
<dbReference type="HAMAP" id="MF_00749">
    <property type="entry name" value="ProQ"/>
    <property type="match status" value="1"/>
</dbReference>
<dbReference type="InterPro" id="IPR023529">
    <property type="entry name" value="ProQ"/>
</dbReference>
<dbReference type="InterPro" id="IPR016103">
    <property type="entry name" value="ProQ/FinO"/>
</dbReference>
<dbReference type="InterPro" id="IPR036442">
    <property type="entry name" value="ProQ/FinO_sf"/>
</dbReference>
<dbReference type="InterPro" id="IPR035236">
    <property type="entry name" value="ProQ_C"/>
</dbReference>
<dbReference type="NCBIfam" id="NF003434">
    <property type="entry name" value="PRK04950.1"/>
    <property type="match status" value="1"/>
</dbReference>
<dbReference type="PANTHER" id="PTHR38106">
    <property type="entry name" value="RNA CHAPERONE PROQ"/>
    <property type="match status" value="1"/>
</dbReference>
<dbReference type="PANTHER" id="PTHR38106:SF1">
    <property type="entry name" value="RNA CHAPERONE PROQ"/>
    <property type="match status" value="1"/>
</dbReference>
<dbReference type="Pfam" id="PF04352">
    <property type="entry name" value="ProQ"/>
    <property type="match status" value="1"/>
</dbReference>
<dbReference type="Pfam" id="PF17516">
    <property type="entry name" value="ProQ_C"/>
    <property type="match status" value="1"/>
</dbReference>
<dbReference type="SMART" id="SM00945">
    <property type="entry name" value="ProQ"/>
    <property type="match status" value="1"/>
</dbReference>
<dbReference type="SUPFAM" id="SSF48657">
    <property type="entry name" value="FinO-like"/>
    <property type="match status" value="1"/>
</dbReference>
<name>PROQ_SHEFN</name>
<feature type="chain" id="PRO_0000303097" description="RNA chaperone ProQ">
    <location>
        <begin position="1"/>
        <end position="203"/>
    </location>
</feature>
<feature type="region of interest" description="Disordered" evidence="2">
    <location>
        <begin position="111"/>
        <end position="138"/>
    </location>
</feature>
<organism>
    <name type="scientific">Shewanella frigidimarina (strain NCIMB 400)</name>
    <dbReference type="NCBI Taxonomy" id="318167"/>
    <lineage>
        <taxon>Bacteria</taxon>
        <taxon>Pseudomonadati</taxon>
        <taxon>Pseudomonadota</taxon>
        <taxon>Gammaproteobacteria</taxon>
        <taxon>Alteromonadales</taxon>
        <taxon>Shewanellaceae</taxon>
        <taxon>Shewanella</taxon>
    </lineage>
</organism>
<accession>Q081J0</accession>
<evidence type="ECO:0000255" key="1">
    <source>
        <dbReference type="HAMAP-Rule" id="MF_00749"/>
    </source>
</evidence>
<evidence type="ECO:0000256" key="2">
    <source>
        <dbReference type="SAM" id="MobiDB-lite"/>
    </source>
</evidence>
<keyword id="KW-0143">Chaperone</keyword>
<keyword id="KW-0963">Cytoplasm</keyword>
<keyword id="KW-1185">Reference proteome</keyword>
<keyword id="KW-0694">RNA-binding</keyword>
<comment type="function">
    <text evidence="1">RNA chaperone with significant RNA binding, RNA strand exchange and RNA duplexing activities.</text>
</comment>
<comment type="subcellular location">
    <subcellularLocation>
        <location evidence="1">Cytoplasm</location>
    </subcellularLocation>
</comment>
<comment type="similarity">
    <text evidence="1">Belongs to the ProQ family.</text>
</comment>
<reference key="1">
    <citation type="submission" date="2006-08" db="EMBL/GenBank/DDBJ databases">
        <title>Complete sequence of Shewanella frigidimarina NCIMB 400.</title>
        <authorList>
            <consortium name="US DOE Joint Genome Institute"/>
            <person name="Copeland A."/>
            <person name="Lucas S."/>
            <person name="Lapidus A."/>
            <person name="Barry K."/>
            <person name="Detter J.C."/>
            <person name="Glavina del Rio T."/>
            <person name="Hammon N."/>
            <person name="Israni S."/>
            <person name="Dalin E."/>
            <person name="Tice H."/>
            <person name="Pitluck S."/>
            <person name="Fredrickson J.K."/>
            <person name="Kolker E."/>
            <person name="McCuel L.A."/>
            <person name="DiChristina T."/>
            <person name="Nealson K.H."/>
            <person name="Newman D."/>
            <person name="Tiedje J.M."/>
            <person name="Zhou J."/>
            <person name="Romine M.F."/>
            <person name="Culley D.E."/>
            <person name="Serres M."/>
            <person name="Chertkov O."/>
            <person name="Brettin T."/>
            <person name="Bruce D."/>
            <person name="Han C."/>
            <person name="Tapia R."/>
            <person name="Gilna P."/>
            <person name="Schmutz J."/>
            <person name="Larimer F."/>
            <person name="Land M."/>
            <person name="Hauser L."/>
            <person name="Kyrpides N."/>
            <person name="Mikhailova N."/>
            <person name="Richardson P."/>
        </authorList>
    </citation>
    <scope>NUCLEOTIDE SEQUENCE [LARGE SCALE GENOMIC DNA]</scope>
    <source>
        <strain>NCIMB 400</strain>
    </source>
</reference>
<gene>
    <name evidence="1" type="primary">proQ</name>
    <name type="ordered locus">Sfri_2229</name>
</gene>
<sequence>MESTDKLTDTNAILAYLYETFPLCFIAEGETKPLKIGLFQDLAERLADDSKVSKTQLRVALRRYTSSWRYLKGVKAGAKRIDLDGNECAELEQEHIDHAILTLKESQDKAKAKRQALAPKKPAKKVAPKRAPAVKKERPAPVAAPVIKLVPAKLEDLKQKQRVNVKLGATPVPGVVTDINKEDVLVQLDSGLSIKVRAEHILL</sequence>
<proteinExistence type="inferred from homology"/>
<protein>
    <recommendedName>
        <fullName evidence="1">RNA chaperone ProQ</fullName>
    </recommendedName>
</protein>